<reference key="1">
    <citation type="journal article" date="2011" name="Appl. Environ. Microbiol.">
        <title>Genomic potential of Marinobacter aquaeolei, a biogeochemical 'opportunitroph'.</title>
        <authorList>
            <person name="Singer E."/>
            <person name="Webb E.A."/>
            <person name="Nelson W.C."/>
            <person name="Heidelberg J.F."/>
            <person name="Ivanova N."/>
            <person name="Pati A."/>
            <person name="Edwards K.J."/>
        </authorList>
    </citation>
    <scope>NUCLEOTIDE SEQUENCE [LARGE SCALE GENOMIC DNA]</scope>
    <source>
        <strain>ATCC 700491 / DSM 11845 / VT8</strain>
    </source>
</reference>
<protein>
    <recommendedName>
        <fullName evidence="1">Nucleoside diphosphate kinase</fullName>
        <shortName evidence="1">NDK</shortName>
        <shortName evidence="1">NDP kinase</shortName>
        <ecNumber evidence="1">2.7.4.6</ecNumber>
    </recommendedName>
    <alternativeName>
        <fullName evidence="1">Nucleoside-2-P kinase</fullName>
    </alternativeName>
</protein>
<organism>
    <name type="scientific">Marinobacter nauticus (strain ATCC 700491 / DSM 11845 / VT8)</name>
    <name type="common">Marinobacter aquaeolei</name>
    <dbReference type="NCBI Taxonomy" id="351348"/>
    <lineage>
        <taxon>Bacteria</taxon>
        <taxon>Pseudomonadati</taxon>
        <taxon>Pseudomonadota</taxon>
        <taxon>Gammaproteobacteria</taxon>
        <taxon>Pseudomonadales</taxon>
        <taxon>Marinobacteraceae</taxon>
        <taxon>Marinobacter</taxon>
    </lineage>
</organism>
<proteinExistence type="inferred from homology"/>
<feature type="chain" id="PRO_1000026248" description="Nucleoside diphosphate kinase">
    <location>
        <begin position="1"/>
        <end position="142"/>
    </location>
</feature>
<feature type="active site" description="Pros-phosphohistidine intermediate" evidence="1">
    <location>
        <position position="117"/>
    </location>
</feature>
<feature type="binding site" evidence="1">
    <location>
        <position position="11"/>
    </location>
    <ligand>
        <name>ATP</name>
        <dbReference type="ChEBI" id="CHEBI:30616"/>
    </ligand>
</feature>
<feature type="binding site" evidence="1">
    <location>
        <position position="59"/>
    </location>
    <ligand>
        <name>ATP</name>
        <dbReference type="ChEBI" id="CHEBI:30616"/>
    </ligand>
</feature>
<feature type="binding site" evidence="1">
    <location>
        <position position="87"/>
    </location>
    <ligand>
        <name>ATP</name>
        <dbReference type="ChEBI" id="CHEBI:30616"/>
    </ligand>
</feature>
<feature type="binding site" evidence="1">
    <location>
        <position position="93"/>
    </location>
    <ligand>
        <name>ATP</name>
        <dbReference type="ChEBI" id="CHEBI:30616"/>
    </ligand>
</feature>
<feature type="binding site" evidence="1">
    <location>
        <position position="104"/>
    </location>
    <ligand>
        <name>ATP</name>
        <dbReference type="ChEBI" id="CHEBI:30616"/>
    </ligand>
</feature>
<feature type="binding site" evidence="1">
    <location>
        <position position="114"/>
    </location>
    <ligand>
        <name>ATP</name>
        <dbReference type="ChEBI" id="CHEBI:30616"/>
    </ligand>
</feature>
<accession>A1TZP6</accession>
<keyword id="KW-0067">ATP-binding</keyword>
<keyword id="KW-0963">Cytoplasm</keyword>
<keyword id="KW-0418">Kinase</keyword>
<keyword id="KW-0460">Magnesium</keyword>
<keyword id="KW-0479">Metal-binding</keyword>
<keyword id="KW-0546">Nucleotide metabolism</keyword>
<keyword id="KW-0547">Nucleotide-binding</keyword>
<keyword id="KW-0597">Phosphoprotein</keyword>
<keyword id="KW-0808">Transferase</keyword>
<sequence length="142" mass="15509">MANERTLSIIKPDAVAKNVIGEIYSRFEKADLKIVAAKMMHLTQEQAEGFYAEHKERPFFNDLVAFMTSGPVVVQVLEGEGAILKNRELMGATNPKEAEAGTIRADFASSIDANAVHGSDSAASAEREVAYFFNDNEICPRG</sequence>
<evidence type="ECO:0000255" key="1">
    <source>
        <dbReference type="HAMAP-Rule" id="MF_00451"/>
    </source>
</evidence>
<name>NDK_MARN8</name>
<comment type="function">
    <text evidence="1">Major role in the synthesis of nucleoside triphosphates other than ATP. The ATP gamma phosphate is transferred to the NDP beta phosphate via a ping-pong mechanism, using a phosphorylated active-site intermediate.</text>
</comment>
<comment type="catalytic activity">
    <reaction evidence="1">
        <text>a 2'-deoxyribonucleoside 5'-diphosphate + ATP = a 2'-deoxyribonucleoside 5'-triphosphate + ADP</text>
        <dbReference type="Rhea" id="RHEA:44640"/>
        <dbReference type="ChEBI" id="CHEBI:30616"/>
        <dbReference type="ChEBI" id="CHEBI:61560"/>
        <dbReference type="ChEBI" id="CHEBI:73316"/>
        <dbReference type="ChEBI" id="CHEBI:456216"/>
        <dbReference type="EC" id="2.7.4.6"/>
    </reaction>
</comment>
<comment type="catalytic activity">
    <reaction evidence="1">
        <text>a ribonucleoside 5'-diphosphate + ATP = a ribonucleoside 5'-triphosphate + ADP</text>
        <dbReference type="Rhea" id="RHEA:18113"/>
        <dbReference type="ChEBI" id="CHEBI:30616"/>
        <dbReference type="ChEBI" id="CHEBI:57930"/>
        <dbReference type="ChEBI" id="CHEBI:61557"/>
        <dbReference type="ChEBI" id="CHEBI:456216"/>
        <dbReference type="EC" id="2.7.4.6"/>
    </reaction>
</comment>
<comment type="cofactor">
    <cofactor evidence="1">
        <name>Mg(2+)</name>
        <dbReference type="ChEBI" id="CHEBI:18420"/>
    </cofactor>
</comment>
<comment type="subunit">
    <text evidence="1">Homotetramer.</text>
</comment>
<comment type="subcellular location">
    <subcellularLocation>
        <location evidence="1">Cytoplasm</location>
    </subcellularLocation>
</comment>
<comment type="similarity">
    <text evidence="1">Belongs to the NDK family.</text>
</comment>
<dbReference type="EC" id="2.7.4.6" evidence="1"/>
<dbReference type="EMBL" id="CP000514">
    <property type="protein sequence ID" value="ABM18215.1"/>
    <property type="molecule type" value="Genomic_DNA"/>
</dbReference>
<dbReference type="RefSeq" id="WP_011784632.1">
    <property type="nucleotide sequence ID" value="NC_008740.1"/>
</dbReference>
<dbReference type="SMR" id="A1TZP6"/>
<dbReference type="STRING" id="351348.Maqu_1123"/>
<dbReference type="GeneID" id="31821563"/>
<dbReference type="KEGG" id="maq:Maqu_1123"/>
<dbReference type="eggNOG" id="COG0105">
    <property type="taxonomic scope" value="Bacteria"/>
</dbReference>
<dbReference type="HOGENOM" id="CLU_060216_8_1_6"/>
<dbReference type="OrthoDB" id="9801161at2"/>
<dbReference type="Proteomes" id="UP000000998">
    <property type="component" value="Chromosome"/>
</dbReference>
<dbReference type="GO" id="GO:0005737">
    <property type="term" value="C:cytoplasm"/>
    <property type="evidence" value="ECO:0007669"/>
    <property type="project" value="UniProtKB-SubCell"/>
</dbReference>
<dbReference type="GO" id="GO:0005524">
    <property type="term" value="F:ATP binding"/>
    <property type="evidence" value="ECO:0007669"/>
    <property type="project" value="UniProtKB-UniRule"/>
</dbReference>
<dbReference type="GO" id="GO:0046872">
    <property type="term" value="F:metal ion binding"/>
    <property type="evidence" value="ECO:0007669"/>
    <property type="project" value="UniProtKB-KW"/>
</dbReference>
<dbReference type="GO" id="GO:0004550">
    <property type="term" value="F:nucleoside diphosphate kinase activity"/>
    <property type="evidence" value="ECO:0007669"/>
    <property type="project" value="UniProtKB-UniRule"/>
</dbReference>
<dbReference type="GO" id="GO:0006241">
    <property type="term" value="P:CTP biosynthetic process"/>
    <property type="evidence" value="ECO:0007669"/>
    <property type="project" value="UniProtKB-UniRule"/>
</dbReference>
<dbReference type="GO" id="GO:0006183">
    <property type="term" value="P:GTP biosynthetic process"/>
    <property type="evidence" value="ECO:0007669"/>
    <property type="project" value="UniProtKB-UniRule"/>
</dbReference>
<dbReference type="GO" id="GO:0006228">
    <property type="term" value="P:UTP biosynthetic process"/>
    <property type="evidence" value="ECO:0007669"/>
    <property type="project" value="UniProtKB-UniRule"/>
</dbReference>
<dbReference type="CDD" id="cd04413">
    <property type="entry name" value="NDPk_I"/>
    <property type="match status" value="1"/>
</dbReference>
<dbReference type="FunFam" id="3.30.70.141:FF:000001">
    <property type="entry name" value="Nucleoside diphosphate kinase"/>
    <property type="match status" value="1"/>
</dbReference>
<dbReference type="Gene3D" id="3.30.70.141">
    <property type="entry name" value="Nucleoside diphosphate kinase-like domain"/>
    <property type="match status" value="1"/>
</dbReference>
<dbReference type="HAMAP" id="MF_00451">
    <property type="entry name" value="NDP_kinase"/>
    <property type="match status" value="1"/>
</dbReference>
<dbReference type="InterPro" id="IPR034907">
    <property type="entry name" value="NDK-like_dom"/>
</dbReference>
<dbReference type="InterPro" id="IPR036850">
    <property type="entry name" value="NDK-like_dom_sf"/>
</dbReference>
<dbReference type="InterPro" id="IPR001564">
    <property type="entry name" value="Nucleoside_diP_kinase"/>
</dbReference>
<dbReference type="NCBIfam" id="NF001908">
    <property type="entry name" value="PRK00668.1"/>
    <property type="match status" value="1"/>
</dbReference>
<dbReference type="PANTHER" id="PTHR46161">
    <property type="entry name" value="NUCLEOSIDE DIPHOSPHATE KINASE"/>
    <property type="match status" value="1"/>
</dbReference>
<dbReference type="PANTHER" id="PTHR46161:SF3">
    <property type="entry name" value="NUCLEOSIDE DIPHOSPHATE KINASE DDB_G0292928-RELATED"/>
    <property type="match status" value="1"/>
</dbReference>
<dbReference type="Pfam" id="PF00334">
    <property type="entry name" value="NDK"/>
    <property type="match status" value="1"/>
</dbReference>
<dbReference type="PRINTS" id="PR01243">
    <property type="entry name" value="NUCDPKINASE"/>
</dbReference>
<dbReference type="SMART" id="SM00562">
    <property type="entry name" value="NDK"/>
    <property type="match status" value="1"/>
</dbReference>
<dbReference type="SUPFAM" id="SSF54919">
    <property type="entry name" value="Nucleoside diphosphate kinase, NDK"/>
    <property type="match status" value="1"/>
</dbReference>
<dbReference type="PROSITE" id="PS51374">
    <property type="entry name" value="NDPK_LIKE"/>
    <property type="match status" value="1"/>
</dbReference>
<gene>
    <name evidence="1" type="primary">ndk</name>
    <name type="ordered locus">Maqu_1123</name>
</gene>